<reference key="1">
    <citation type="journal article" date="2006" name="J. Bacteriol.">
        <title>Whole-genome sequence of Listeria welshimeri reveals common steps in genome reduction with Listeria innocua as compared to Listeria monocytogenes.</title>
        <authorList>
            <person name="Hain T."/>
            <person name="Steinweg C."/>
            <person name="Kuenne C.T."/>
            <person name="Billion A."/>
            <person name="Ghai R."/>
            <person name="Chatterjee S.S."/>
            <person name="Domann E."/>
            <person name="Kaerst U."/>
            <person name="Goesmann A."/>
            <person name="Bekel T."/>
            <person name="Bartels D."/>
            <person name="Kaiser O."/>
            <person name="Meyer F."/>
            <person name="Puehler A."/>
            <person name="Weisshaar B."/>
            <person name="Wehland J."/>
            <person name="Liang C."/>
            <person name="Dandekar T."/>
            <person name="Lampidis R."/>
            <person name="Kreft J."/>
            <person name="Goebel W."/>
            <person name="Chakraborty T."/>
        </authorList>
    </citation>
    <scope>NUCLEOTIDE SEQUENCE [LARGE SCALE GENOMIC DNA]</scope>
    <source>
        <strain>ATCC 35897 / DSM 20650 / CCUG 15529 / CIP 8149 / NCTC 11857 / SLCC 5334 / V8</strain>
    </source>
</reference>
<sequence length="304" mass="33261">MLFEQIAANKRKTVFIVIGFFIFVLMVGAAIGIIVWNNYLNGLILAAVIGAFYILIMVMTSSSVVMAMNRAKRITSKEQAPVLWDTVESMAMVASIPMPKVYIMNDLSLNAFSAGISPEKGAVAVTQGLLDNLERYELEGVIAHEVSHIRNYDIRLSTISIALVAVIAILSDLAMRMIFWGSVTGSRNNRKNDNNSGGGAQLIIYIVALVFVVLAPIIATAIQFALSRNREYLADASAIELTRNPDGLIQALQKVSGDTKKMKEVSASSESIYFSSPLKSKKDKPGIFDSHPPISSRIERLENM</sequence>
<evidence type="ECO:0000255" key="1">
    <source>
        <dbReference type="HAMAP-Rule" id="MF_00188"/>
    </source>
</evidence>
<evidence type="ECO:0000256" key="2">
    <source>
        <dbReference type="SAM" id="MobiDB-lite"/>
    </source>
</evidence>
<proteinExistence type="inferred from homology"/>
<protein>
    <recommendedName>
        <fullName evidence="1">Protease HtpX homolog</fullName>
        <ecNumber evidence="1">3.4.24.-</ecNumber>
    </recommendedName>
</protein>
<dbReference type="EC" id="3.4.24.-" evidence="1"/>
<dbReference type="EMBL" id="AM263198">
    <property type="protein sequence ID" value="CAK20363.1"/>
    <property type="molecule type" value="Genomic_DNA"/>
</dbReference>
<dbReference type="RefSeq" id="WP_011701774.1">
    <property type="nucleotide sequence ID" value="NC_008555.1"/>
</dbReference>
<dbReference type="STRING" id="386043.lwe0945"/>
<dbReference type="GeneID" id="61188836"/>
<dbReference type="KEGG" id="lwe:lwe0945"/>
<dbReference type="eggNOG" id="COG0501">
    <property type="taxonomic scope" value="Bacteria"/>
</dbReference>
<dbReference type="HOGENOM" id="CLU_042266_2_1_9"/>
<dbReference type="OrthoDB" id="15218at2"/>
<dbReference type="Proteomes" id="UP000000779">
    <property type="component" value="Chromosome"/>
</dbReference>
<dbReference type="GO" id="GO:0005886">
    <property type="term" value="C:plasma membrane"/>
    <property type="evidence" value="ECO:0007669"/>
    <property type="project" value="UniProtKB-SubCell"/>
</dbReference>
<dbReference type="GO" id="GO:0004222">
    <property type="term" value="F:metalloendopeptidase activity"/>
    <property type="evidence" value="ECO:0007669"/>
    <property type="project" value="UniProtKB-UniRule"/>
</dbReference>
<dbReference type="GO" id="GO:0008270">
    <property type="term" value="F:zinc ion binding"/>
    <property type="evidence" value="ECO:0007669"/>
    <property type="project" value="UniProtKB-UniRule"/>
</dbReference>
<dbReference type="GO" id="GO:0006508">
    <property type="term" value="P:proteolysis"/>
    <property type="evidence" value="ECO:0007669"/>
    <property type="project" value="UniProtKB-KW"/>
</dbReference>
<dbReference type="CDD" id="cd07340">
    <property type="entry name" value="M48B_Htpx_like"/>
    <property type="match status" value="1"/>
</dbReference>
<dbReference type="Gene3D" id="3.30.2010.10">
    <property type="entry name" value="Metalloproteases ('zincins'), catalytic domain"/>
    <property type="match status" value="1"/>
</dbReference>
<dbReference type="HAMAP" id="MF_00188">
    <property type="entry name" value="Pept_M48_protease_HtpX"/>
    <property type="match status" value="1"/>
</dbReference>
<dbReference type="InterPro" id="IPR050083">
    <property type="entry name" value="HtpX_protease"/>
</dbReference>
<dbReference type="InterPro" id="IPR022919">
    <property type="entry name" value="Pept_M48_protease_HtpX"/>
</dbReference>
<dbReference type="InterPro" id="IPR001915">
    <property type="entry name" value="Peptidase_M48"/>
</dbReference>
<dbReference type="NCBIfam" id="NF003425">
    <property type="entry name" value="PRK04897.1"/>
    <property type="match status" value="1"/>
</dbReference>
<dbReference type="PANTHER" id="PTHR43221">
    <property type="entry name" value="PROTEASE HTPX"/>
    <property type="match status" value="1"/>
</dbReference>
<dbReference type="PANTHER" id="PTHR43221:SF1">
    <property type="entry name" value="PROTEASE HTPX"/>
    <property type="match status" value="1"/>
</dbReference>
<dbReference type="Pfam" id="PF01435">
    <property type="entry name" value="Peptidase_M48"/>
    <property type="match status" value="1"/>
</dbReference>
<name>HTPX_LISW6</name>
<keyword id="KW-1003">Cell membrane</keyword>
<keyword id="KW-0378">Hydrolase</keyword>
<keyword id="KW-0472">Membrane</keyword>
<keyword id="KW-0479">Metal-binding</keyword>
<keyword id="KW-0482">Metalloprotease</keyword>
<keyword id="KW-0645">Protease</keyword>
<keyword id="KW-0812">Transmembrane</keyword>
<keyword id="KW-1133">Transmembrane helix</keyword>
<keyword id="KW-0862">Zinc</keyword>
<accession>A0AH81</accession>
<gene>
    <name evidence="1" type="primary">htpX</name>
    <name type="ordered locus">lwe0945</name>
</gene>
<feature type="chain" id="PRO_1000020884" description="Protease HtpX homolog">
    <location>
        <begin position="1"/>
        <end position="304"/>
    </location>
</feature>
<feature type="transmembrane region" description="Helical" evidence="1">
    <location>
        <begin position="14"/>
        <end position="34"/>
    </location>
</feature>
<feature type="transmembrane region" description="Helical" evidence="1">
    <location>
        <begin position="39"/>
        <end position="59"/>
    </location>
</feature>
<feature type="transmembrane region" description="Helical" evidence="1">
    <location>
        <begin position="161"/>
        <end position="181"/>
    </location>
</feature>
<feature type="transmembrane region" description="Helical" evidence="1">
    <location>
        <begin position="202"/>
        <end position="222"/>
    </location>
</feature>
<feature type="region of interest" description="Disordered" evidence="2">
    <location>
        <begin position="276"/>
        <end position="295"/>
    </location>
</feature>
<feature type="active site" evidence="1">
    <location>
        <position position="145"/>
    </location>
</feature>
<feature type="binding site" evidence="1">
    <location>
        <position position="144"/>
    </location>
    <ligand>
        <name>Zn(2+)</name>
        <dbReference type="ChEBI" id="CHEBI:29105"/>
        <note>catalytic</note>
    </ligand>
</feature>
<feature type="binding site" evidence="1">
    <location>
        <position position="148"/>
    </location>
    <ligand>
        <name>Zn(2+)</name>
        <dbReference type="ChEBI" id="CHEBI:29105"/>
        <note>catalytic</note>
    </ligand>
</feature>
<feature type="binding site" evidence="1">
    <location>
        <position position="231"/>
    </location>
    <ligand>
        <name>Zn(2+)</name>
        <dbReference type="ChEBI" id="CHEBI:29105"/>
        <note>catalytic</note>
    </ligand>
</feature>
<organism>
    <name type="scientific">Listeria welshimeri serovar 6b (strain ATCC 35897 / DSM 20650 / CCUG 15529 / CIP 8149 / NCTC 11857 / SLCC 5334 / V8)</name>
    <dbReference type="NCBI Taxonomy" id="386043"/>
    <lineage>
        <taxon>Bacteria</taxon>
        <taxon>Bacillati</taxon>
        <taxon>Bacillota</taxon>
        <taxon>Bacilli</taxon>
        <taxon>Bacillales</taxon>
        <taxon>Listeriaceae</taxon>
        <taxon>Listeria</taxon>
    </lineage>
</organism>
<comment type="cofactor">
    <cofactor evidence="1">
        <name>Zn(2+)</name>
        <dbReference type="ChEBI" id="CHEBI:29105"/>
    </cofactor>
    <text evidence="1">Binds 1 zinc ion per subunit.</text>
</comment>
<comment type="subcellular location">
    <subcellularLocation>
        <location evidence="1">Cell membrane</location>
        <topology evidence="1">Multi-pass membrane protein</topology>
    </subcellularLocation>
</comment>
<comment type="similarity">
    <text evidence="1">Belongs to the peptidase M48B family.</text>
</comment>